<sequence length="443" mass="50176">MESLASLYKNHIATLQERTRDALARFKLDALLIHSGELFNVFLDDHPYPFKVNPQFKAWVPVTQVPNCWLLVDGVNKPKLWFYLPVDYWHNVEPLPTSFWTEDVEVIALPKADGIGSLLPAARGNIGYIGPVPERALQLGIEASNINPKGVIDYLHYYRSFKTEYELACMREAQKMAVNGHRAAEEAFRSGMSEFDINIAYLTATGHRDTDVPYSNIVALNEHAAVLHYTKLDHQAPEEMRSFLLDAGAEYNGYAADLTRTWSAKSDNDYAQLVKDVNDEQLALIATMKAGVSYVDYHIQFHQRIAKLLRKHQIITDMSEEAMVENDLTGPFMPHGIGHPLGLQVHDVAGFMQDDSGTHLAAPAKYPYLRCTRILQPGMVLTIEPGIYFIESLLAPWREGQFSKHFNWQKIEALKPFGGIRIEDNVVIHENNVENMTRDLKLA</sequence>
<dbReference type="EC" id="3.4.13.9" evidence="1"/>
<dbReference type="EMBL" id="CP001396">
    <property type="protein sequence ID" value="ACR65277.1"/>
    <property type="molecule type" value="Genomic_DNA"/>
</dbReference>
<dbReference type="RefSeq" id="WP_000444561.1">
    <property type="nucleotide sequence ID" value="NC_012759.1"/>
</dbReference>
<dbReference type="SMR" id="C5A021"/>
<dbReference type="MEROPS" id="M24.003"/>
<dbReference type="GeneID" id="86861950"/>
<dbReference type="KEGG" id="ebw:BWG_3523"/>
<dbReference type="HOGENOM" id="CLU_050675_0_0_6"/>
<dbReference type="GO" id="GO:0005829">
    <property type="term" value="C:cytosol"/>
    <property type="evidence" value="ECO:0007669"/>
    <property type="project" value="TreeGrafter"/>
</dbReference>
<dbReference type="GO" id="GO:0004177">
    <property type="term" value="F:aminopeptidase activity"/>
    <property type="evidence" value="ECO:0007669"/>
    <property type="project" value="TreeGrafter"/>
</dbReference>
<dbReference type="GO" id="GO:0046872">
    <property type="term" value="F:metal ion binding"/>
    <property type="evidence" value="ECO:0007669"/>
    <property type="project" value="UniProtKB-KW"/>
</dbReference>
<dbReference type="GO" id="GO:0008235">
    <property type="term" value="F:metalloexopeptidase activity"/>
    <property type="evidence" value="ECO:0007669"/>
    <property type="project" value="UniProtKB-UniRule"/>
</dbReference>
<dbReference type="GO" id="GO:0016795">
    <property type="term" value="F:phosphoric triester hydrolase activity"/>
    <property type="evidence" value="ECO:0007669"/>
    <property type="project" value="InterPro"/>
</dbReference>
<dbReference type="GO" id="GO:0102009">
    <property type="term" value="F:proline dipeptidase activity"/>
    <property type="evidence" value="ECO:0007669"/>
    <property type="project" value="UniProtKB-EC"/>
</dbReference>
<dbReference type="GO" id="GO:0006508">
    <property type="term" value="P:proteolysis"/>
    <property type="evidence" value="ECO:0007669"/>
    <property type="project" value="UniProtKB-KW"/>
</dbReference>
<dbReference type="CDD" id="cd01087">
    <property type="entry name" value="Prolidase"/>
    <property type="match status" value="1"/>
</dbReference>
<dbReference type="FunFam" id="3.40.350.10:FF:000002">
    <property type="entry name" value="Xaa-Pro dipeptidase"/>
    <property type="match status" value="1"/>
</dbReference>
<dbReference type="FunFam" id="3.90.230.10:FF:000006">
    <property type="entry name" value="Xaa-Pro dipeptidase"/>
    <property type="match status" value="1"/>
</dbReference>
<dbReference type="Gene3D" id="3.90.230.10">
    <property type="entry name" value="Creatinase/methionine aminopeptidase superfamily"/>
    <property type="match status" value="1"/>
</dbReference>
<dbReference type="Gene3D" id="3.40.350.10">
    <property type="entry name" value="Creatinase/prolidase N-terminal domain"/>
    <property type="match status" value="1"/>
</dbReference>
<dbReference type="HAMAP" id="MF_01279">
    <property type="entry name" value="X_Pro_dipeptid"/>
    <property type="match status" value="1"/>
</dbReference>
<dbReference type="InterPro" id="IPR029149">
    <property type="entry name" value="Creatin/AminoP/Spt16_N"/>
</dbReference>
<dbReference type="InterPro" id="IPR036005">
    <property type="entry name" value="Creatinase/aminopeptidase-like"/>
</dbReference>
<dbReference type="InterPro" id="IPR048819">
    <property type="entry name" value="PepQ_N"/>
</dbReference>
<dbReference type="InterPro" id="IPR000994">
    <property type="entry name" value="Pept_M24"/>
</dbReference>
<dbReference type="InterPro" id="IPR001131">
    <property type="entry name" value="Peptidase_M24B_aminopep-P_CS"/>
</dbReference>
<dbReference type="InterPro" id="IPR052433">
    <property type="entry name" value="X-Pro_dipept-like"/>
</dbReference>
<dbReference type="InterPro" id="IPR022846">
    <property type="entry name" value="X_Pro_dipept"/>
</dbReference>
<dbReference type="NCBIfam" id="NF010133">
    <property type="entry name" value="PRK13607.1"/>
    <property type="match status" value="1"/>
</dbReference>
<dbReference type="PANTHER" id="PTHR43226">
    <property type="entry name" value="XAA-PRO AMINOPEPTIDASE 3"/>
    <property type="match status" value="1"/>
</dbReference>
<dbReference type="PANTHER" id="PTHR43226:SF8">
    <property type="entry name" value="XAA-PRO DIPEPTIDASE"/>
    <property type="match status" value="1"/>
</dbReference>
<dbReference type="Pfam" id="PF21216">
    <property type="entry name" value="PepQ_N"/>
    <property type="match status" value="1"/>
</dbReference>
<dbReference type="Pfam" id="PF00557">
    <property type="entry name" value="Peptidase_M24"/>
    <property type="match status" value="1"/>
</dbReference>
<dbReference type="SUPFAM" id="SSF55920">
    <property type="entry name" value="Creatinase/aminopeptidase"/>
    <property type="match status" value="1"/>
</dbReference>
<dbReference type="PROSITE" id="PS00491">
    <property type="entry name" value="PROLINE_PEPTIDASE"/>
    <property type="match status" value="1"/>
</dbReference>
<reference key="1">
    <citation type="journal article" date="2009" name="J. Bacteriol.">
        <title>Genomic sequencing reveals regulatory mutations and recombinational events in the widely used MC4100 lineage of Escherichia coli K-12.</title>
        <authorList>
            <person name="Ferenci T."/>
            <person name="Zhou Z."/>
            <person name="Betteridge T."/>
            <person name="Ren Y."/>
            <person name="Liu Y."/>
            <person name="Feng L."/>
            <person name="Reeves P.R."/>
            <person name="Wang L."/>
        </authorList>
    </citation>
    <scope>NUCLEOTIDE SEQUENCE [LARGE SCALE GENOMIC DNA]</scope>
    <source>
        <strain>K12 / MC4100 / BW2952</strain>
    </source>
</reference>
<name>PEPQ_ECOBW</name>
<proteinExistence type="inferred from homology"/>
<keyword id="KW-0224">Dipeptidase</keyword>
<keyword id="KW-0378">Hydrolase</keyword>
<keyword id="KW-0464">Manganese</keyword>
<keyword id="KW-0479">Metal-binding</keyword>
<keyword id="KW-0482">Metalloprotease</keyword>
<keyword id="KW-0645">Protease</keyword>
<protein>
    <recommendedName>
        <fullName evidence="1">Xaa-Pro dipeptidase</fullName>
        <shortName evidence="1">X-Pro dipeptidase</shortName>
        <ecNumber evidence="1">3.4.13.9</ecNumber>
    </recommendedName>
    <alternativeName>
        <fullName evidence="1">Imidodipeptidase</fullName>
    </alternativeName>
    <alternativeName>
        <fullName evidence="1">Proline dipeptidase</fullName>
        <shortName evidence="1">Prolidase</shortName>
    </alternativeName>
</protein>
<accession>C5A021</accession>
<gene>
    <name evidence="1" type="primary">pepQ</name>
    <name type="ordered locus">BWG_3523</name>
</gene>
<evidence type="ECO:0000255" key="1">
    <source>
        <dbReference type="HAMAP-Rule" id="MF_01279"/>
    </source>
</evidence>
<comment type="function">
    <text evidence="1">Splits dipeptides with a prolyl residue in the C-terminal position.</text>
</comment>
<comment type="catalytic activity">
    <reaction evidence="1">
        <text>Xaa-L-Pro dipeptide + H2O = an L-alpha-amino acid + L-proline</text>
        <dbReference type="Rhea" id="RHEA:76407"/>
        <dbReference type="ChEBI" id="CHEBI:15377"/>
        <dbReference type="ChEBI" id="CHEBI:59869"/>
        <dbReference type="ChEBI" id="CHEBI:60039"/>
        <dbReference type="ChEBI" id="CHEBI:195196"/>
        <dbReference type="EC" id="3.4.13.9"/>
    </reaction>
</comment>
<comment type="cofactor">
    <cofactor evidence="1">
        <name>Mn(2+)</name>
        <dbReference type="ChEBI" id="CHEBI:29035"/>
    </cofactor>
    <text evidence="1">Binds 2 manganese ions per subunit.</text>
</comment>
<comment type="similarity">
    <text evidence="1">Belongs to the peptidase M24B family. Bacterial-type prolidase subfamily.</text>
</comment>
<organism>
    <name type="scientific">Escherichia coli (strain K12 / MC4100 / BW2952)</name>
    <dbReference type="NCBI Taxonomy" id="595496"/>
    <lineage>
        <taxon>Bacteria</taxon>
        <taxon>Pseudomonadati</taxon>
        <taxon>Pseudomonadota</taxon>
        <taxon>Gammaproteobacteria</taxon>
        <taxon>Enterobacterales</taxon>
        <taxon>Enterobacteriaceae</taxon>
        <taxon>Escherichia</taxon>
    </lineage>
</organism>
<feature type="chain" id="PRO_1000214202" description="Xaa-Pro dipeptidase">
    <location>
        <begin position="1"/>
        <end position="443"/>
    </location>
</feature>
<feature type="binding site" evidence="1">
    <location>
        <position position="246"/>
    </location>
    <ligand>
        <name>Mn(2+)</name>
        <dbReference type="ChEBI" id="CHEBI:29035"/>
        <label>2</label>
    </ligand>
</feature>
<feature type="binding site" evidence="1">
    <location>
        <position position="257"/>
    </location>
    <ligand>
        <name>Mn(2+)</name>
        <dbReference type="ChEBI" id="CHEBI:29035"/>
        <label>1</label>
    </ligand>
</feature>
<feature type="binding site" evidence="1">
    <location>
        <position position="257"/>
    </location>
    <ligand>
        <name>Mn(2+)</name>
        <dbReference type="ChEBI" id="CHEBI:29035"/>
        <label>2</label>
    </ligand>
</feature>
<feature type="binding site" evidence="1">
    <location>
        <position position="339"/>
    </location>
    <ligand>
        <name>Mn(2+)</name>
        <dbReference type="ChEBI" id="CHEBI:29035"/>
        <label>1</label>
    </ligand>
</feature>
<feature type="binding site" evidence="1">
    <location>
        <position position="384"/>
    </location>
    <ligand>
        <name>Mn(2+)</name>
        <dbReference type="ChEBI" id="CHEBI:29035"/>
        <label>1</label>
    </ligand>
</feature>
<feature type="binding site" evidence="1">
    <location>
        <position position="423"/>
    </location>
    <ligand>
        <name>Mn(2+)</name>
        <dbReference type="ChEBI" id="CHEBI:29035"/>
        <label>1</label>
    </ligand>
</feature>
<feature type="binding site" evidence="1">
    <location>
        <position position="423"/>
    </location>
    <ligand>
        <name>Mn(2+)</name>
        <dbReference type="ChEBI" id="CHEBI:29035"/>
        <label>2</label>
    </ligand>
</feature>